<organismHost>
    <name type="scientific">Aves</name>
    <dbReference type="NCBI Taxonomy" id="8782"/>
</organismHost>
<comment type="function">
    <text evidence="1">Encapsidates the negative strand viral RNA, protecting it from nucleases. The encapsidated genomic RNA is termed the ribonucleoprotein (RNP) and serves as template for transcription and replication. The RNP needs to be localized in the host nucleus to start an infectious cycle, but is too large to diffuse through the nuclear pore complex. NP comprises at least 2 nuclear localization signals that are responsible for the active RNP import into the nucleus through cellular importin alpha/beta pathway. Later in the infection, nclear export of RNPs are mediated through viral proteins NEP interacting with M1 which binds nucleoproteins. It is possible that nucleoprotein binds directly host exportin-1/XPO1 and plays an active role in RNPs nuclear export. M1 interaction with RNP seems to hide nucleoprotein's nuclear localization signals. Soon after a virion infects a new cell, M1 dissociates from the RNP under acidification of the virion driven by M2 protein. Dissociation of M1 from RNP unmasks nucleoprotein's nuclear localization signals, targeting the RNP to the nucleus.</text>
</comment>
<comment type="subunit">
    <text evidence="1">Homomultimerizes to form the nucleocapsid. May bind host exportin-1/XPO1. Binds to viral genomic RNA. Protein-RNA contacts are mediated by a combination of electrostatic interactions between positively charged residues and the phosphate backbone and planar interactions between aromatic side chains and bases.</text>
</comment>
<comment type="subcellular location">
    <subcellularLocation>
        <location evidence="1">Virion</location>
    </subcellularLocation>
    <subcellularLocation>
        <location evidence="1">Host nucleus</location>
    </subcellularLocation>
</comment>
<comment type="PTM">
    <text evidence="1">Late in virus-infected cells, may be cleaved from a 56-kDa protein to a 53-kDa protein by a cellular caspase. This cleavage might be a marker for the onset of apoptosis in infected cells or have a specific function in virus host interaction.</text>
</comment>
<comment type="similarity">
    <text evidence="1">Belongs to the influenza viruses nucleoprotein family.</text>
</comment>
<protein>
    <recommendedName>
        <fullName evidence="1">Nucleoprotein</fullName>
    </recommendedName>
    <alternativeName>
        <fullName evidence="1">Nucleocapsid protein</fullName>
        <shortName evidence="1">Protein N</shortName>
    </alternativeName>
</protein>
<keyword id="KW-0167">Capsid protein</keyword>
<keyword id="KW-1139">Helical capsid protein</keyword>
<keyword id="KW-1048">Host nucleus</keyword>
<keyword id="KW-0945">Host-virus interaction</keyword>
<keyword id="KW-0687">Ribonucleoprotein</keyword>
<keyword id="KW-0694">RNA-binding</keyword>
<keyword id="KW-0543">Viral nucleoprotein</keyword>
<keyword id="KW-1163">Viral penetration into host nucleus</keyword>
<keyword id="KW-0946">Virion</keyword>
<keyword id="KW-1160">Virus entry into host cell</keyword>
<feature type="chain" id="PRO_0000402423" description="Nucleoprotein">
    <location>
        <begin position="1"/>
        <end position="498"/>
    </location>
</feature>
<feature type="region of interest" description="Disordered" evidence="2">
    <location>
        <begin position="1"/>
        <end position="21"/>
    </location>
</feature>
<feature type="region of interest" description="Disordered" evidence="2">
    <location>
        <begin position="79"/>
        <end position="98"/>
    </location>
</feature>
<feature type="short sequence motif" description="Unconventional nuclear localization signal" evidence="1">
    <location>
        <begin position="1"/>
        <end position="18"/>
    </location>
</feature>
<feature type="short sequence motif" description="Bipartite nuclear localization signal" evidence="1">
    <location>
        <begin position="198"/>
        <end position="216"/>
    </location>
</feature>
<feature type="compositionally biased region" description="Basic and acidic residues" evidence="2">
    <location>
        <begin position="79"/>
        <end position="91"/>
    </location>
</feature>
<reference key="1">
    <citation type="journal article" date="2006" name="Science">
        <title>Large-scale sequence analysis of avian influenza isolates.</title>
        <authorList>
            <person name="Obenauer J.C."/>
            <person name="Denson J."/>
            <person name="Mehta P.K."/>
            <person name="Su X."/>
            <person name="Mukatira S."/>
            <person name="Finkelstein D.B."/>
            <person name="Xu X."/>
            <person name="Wang J."/>
            <person name="Ma J."/>
            <person name="Fan Y."/>
            <person name="Rakestraw K.M."/>
            <person name="Webster R.G."/>
            <person name="Hoffmann E."/>
            <person name="Krauss S."/>
            <person name="Zheng J."/>
            <person name="Zhang Z."/>
            <person name="Naeve C.W."/>
        </authorList>
    </citation>
    <scope>NUCLEOTIDE SEQUENCE [GENOMIC RNA]</scope>
</reference>
<reference key="2">
    <citation type="journal article" date="2010" name="Virol. J.">
        <title>Full genome comparison and characterization of avian H10 viruses with different pathogenicity in Mink (Mustela vison) reveals genetic and functional differences in the non-structural gene.</title>
        <authorList>
            <person name="Zohari S."/>
            <person name="Metreveli G."/>
            <person name="Kiss I."/>
            <person name="Belak S."/>
            <person name="Berg M."/>
        </authorList>
    </citation>
    <scope>NUCLEOTIDE SEQUENCE [GENOMIC RNA]</scope>
</reference>
<gene>
    <name evidence="1" type="primary">NP</name>
</gene>
<dbReference type="EMBL" id="CY014674">
    <property type="protein sequence ID" value="ABI84538.1"/>
    <property type="molecule type" value="Genomic_RNA"/>
</dbReference>
<dbReference type="EMBL" id="GQ176133">
    <property type="protein sequence ID" value="ACS88996.1"/>
    <property type="molecule type" value="Genomic_RNA"/>
</dbReference>
<dbReference type="SMR" id="Q0A444"/>
<dbReference type="Proteomes" id="UP000008217">
    <property type="component" value="Genome"/>
</dbReference>
<dbReference type="Proteomes" id="UP000130909">
    <property type="component" value="Genome"/>
</dbReference>
<dbReference type="GO" id="GO:0019029">
    <property type="term" value="C:helical viral capsid"/>
    <property type="evidence" value="ECO:0007669"/>
    <property type="project" value="UniProtKB-UniRule"/>
</dbReference>
<dbReference type="GO" id="GO:0043657">
    <property type="term" value="C:host cell"/>
    <property type="evidence" value="ECO:0007669"/>
    <property type="project" value="GOC"/>
</dbReference>
<dbReference type="GO" id="GO:0042025">
    <property type="term" value="C:host cell nucleus"/>
    <property type="evidence" value="ECO:0007669"/>
    <property type="project" value="UniProtKB-SubCell"/>
</dbReference>
<dbReference type="GO" id="GO:1990904">
    <property type="term" value="C:ribonucleoprotein complex"/>
    <property type="evidence" value="ECO:0007669"/>
    <property type="project" value="UniProtKB-KW"/>
</dbReference>
<dbReference type="GO" id="GO:0019013">
    <property type="term" value="C:viral nucleocapsid"/>
    <property type="evidence" value="ECO:0007669"/>
    <property type="project" value="UniProtKB-UniRule"/>
</dbReference>
<dbReference type="GO" id="GO:0003723">
    <property type="term" value="F:RNA binding"/>
    <property type="evidence" value="ECO:0007669"/>
    <property type="project" value="UniProtKB-UniRule"/>
</dbReference>
<dbReference type="GO" id="GO:0005198">
    <property type="term" value="F:structural molecule activity"/>
    <property type="evidence" value="ECO:0007669"/>
    <property type="project" value="UniProtKB-UniRule"/>
</dbReference>
<dbReference type="GO" id="GO:0046718">
    <property type="term" value="P:symbiont entry into host cell"/>
    <property type="evidence" value="ECO:0007669"/>
    <property type="project" value="UniProtKB-KW"/>
</dbReference>
<dbReference type="GO" id="GO:0075732">
    <property type="term" value="P:viral penetration into host nucleus"/>
    <property type="evidence" value="ECO:0007669"/>
    <property type="project" value="UniProtKB-UniRule"/>
</dbReference>
<dbReference type="HAMAP" id="MF_04070">
    <property type="entry name" value="INFV_NCAP"/>
    <property type="match status" value="1"/>
</dbReference>
<dbReference type="InterPro" id="IPR002141">
    <property type="entry name" value="Flu_NP"/>
</dbReference>
<dbReference type="Pfam" id="PF00506">
    <property type="entry name" value="Flu_NP"/>
    <property type="match status" value="1"/>
</dbReference>
<dbReference type="SUPFAM" id="SSF161003">
    <property type="entry name" value="flu NP-like"/>
    <property type="match status" value="1"/>
</dbReference>
<evidence type="ECO:0000255" key="1">
    <source>
        <dbReference type="HAMAP-Rule" id="MF_04070"/>
    </source>
</evidence>
<evidence type="ECO:0000256" key="2">
    <source>
        <dbReference type="SAM" id="MobiDB-lite"/>
    </source>
</evidence>
<accession>Q0A444</accession>
<organism>
    <name type="scientific">Influenza A virus (strain A/Duck/Germany/1949 H10N7)</name>
    <dbReference type="NCBI Taxonomy" id="382838"/>
    <lineage>
        <taxon>Viruses</taxon>
        <taxon>Riboviria</taxon>
        <taxon>Orthornavirae</taxon>
        <taxon>Negarnaviricota</taxon>
        <taxon>Polyploviricotina</taxon>
        <taxon>Insthoviricetes</taxon>
        <taxon>Articulavirales</taxon>
        <taxon>Orthomyxoviridae</taxon>
        <taxon>Alphainfluenzavirus</taxon>
        <taxon>Alphainfluenzavirus influenzae</taxon>
        <taxon>Influenza A virus</taxon>
    </lineage>
</organism>
<sequence>MASQGTKRSYEQMETGGERQNATEIRASVGRMVGGIGRFYIQMCTELKLSDYEGRLIQNSITIERMVLSAFDERRNKYLEEHPSAGKDPKKTGGPIYRRRDGKWMRELTLYDKEEIRRIWRQANNGEDATAGLTHLMIWHSNLNDATYQRTRALVRTGMDPRMCSLMQGSTLPRRSGAAGAAVKGVGTMVMELIRMIKRGINDRNFWRGENGRRTRIAYERMCNILKGKFQTAAQRAIMDQVRESRNPGNAEIEDLIFLARSALILRGSVAHKSCLPACVYGLAVASGYDFEREGYSLVGIDPFRLLQNSQVFSLIRPNENPAHKSQLVWMACHSAAFEDLRVSSFIRGTRVVPRGQLSTRGVQIASNENMETMDSSTLELRSRYWAIRTRSGGNTNQQRASAGQISVQPTFSVQRNLPFERATIMAAFTGNTEGRTSDMRTEIIRMMESARPEDVSFQGRGVFELSDEKATNPIVPSFDMSNEGSYFFGDNAEEYDN</sequence>
<proteinExistence type="inferred from homology"/>
<name>NCAP_I49A1</name>